<accession>Q136W9</accession>
<reference key="1">
    <citation type="submission" date="2006-03" db="EMBL/GenBank/DDBJ databases">
        <title>Complete sequence of Rhodopseudomonas palustris BisB5.</title>
        <authorList>
            <consortium name="US DOE Joint Genome Institute"/>
            <person name="Copeland A."/>
            <person name="Lucas S."/>
            <person name="Lapidus A."/>
            <person name="Barry K."/>
            <person name="Detter J.C."/>
            <person name="Glavina del Rio T."/>
            <person name="Hammon N."/>
            <person name="Israni S."/>
            <person name="Dalin E."/>
            <person name="Tice H."/>
            <person name="Pitluck S."/>
            <person name="Chain P."/>
            <person name="Malfatti S."/>
            <person name="Shin M."/>
            <person name="Vergez L."/>
            <person name="Schmutz J."/>
            <person name="Larimer F."/>
            <person name="Land M."/>
            <person name="Hauser L."/>
            <person name="Pelletier D.A."/>
            <person name="Kyrpides N."/>
            <person name="Lykidis A."/>
            <person name="Oda Y."/>
            <person name="Harwood C.S."/>
            <person name="Richardson P."/>
        </authorList>
    </citation>
    <scope>NUCLEOTIDE SEQUENCE [LARGE SCALE GENOMIC DNA]</scope>
    <source>
        <strain>BisB5</strain>
    </source>
</reference>
<protein>
    <recommendedName>
        <fullName evidence="1">Large-conductance mechanosensitive channel</fullName>
    </recommendedName>
</protein>
<name>MSCL_RHOPS</name>
<keyword id="KW-0997">Cell inner membrane</keyword>
<keyword id="KW-1003">Cell membrane</keyword>
<keyword id="KW-0407">Ion channel</keyword>
<keyword id="KW-0406">Ion transport</keyword>
<keyword id="KW-0472">Membrane</keyword>
<keyword id="KW-0812">Transmembrane</keyword>
<keyword id="KW-1133">Transmembrane helix</keyword>
<keyword id="KW-0813">Transport</keyword>
<organism>
    <name type="scientific">Rhodopseudomonas palustris (strain BisB5)</name>
    <dbReference type="NCBI Taxonomy" id="316057"/>
    <lineage>
        <taxon>Bacteria</taxon>
        <taxon>Pseudomonadati</taxon>
        <taxon>Pseudomonadota</taxon>
        <taxon>Alphaproteobacteria</taxon>
        <taxon>Hyphomicrobiales</taxon>
        <taxon>Nitrobacteraceae</taxon>
        <taxon>Rhodopseudomonas</taxon>
    </lineage>
</organism>
<gene>
    <name evidence="1" type="primary">mscL</name>
    <name type="ordered locus">RPD_2641</name>
</gene>
<dbReference type="EMBL" id="CP000283">
    <property type="protein sequence ID" value="ABE39870.1"/>
    <property type="molecule type" value="Genomic_DNA"/>
</dbReference>
<dbReference type="SMR" id="Q136W9"/>
<dbReference type="STRING" id="316057.RPD_2641"/>
<dbReference type="KEGG" id="rpd:RPD_2641"/>
<dbReference type="eggNOG" id="COG1970">
    <property type="taxonomic scope" value="Bacteria"/>
</dbReference>
<dbReference type="HOGENOM" id="CLU_095787_0_1_5"/>
<dbReference type="BioCyc" id="RPAL316057:RPD_RS13285-MONOMER"/>
<dbReference type="Proteomes" id="UP000001818">
    <property type="component" value="Chromosome"/>
</dbReference>
<dbReference type="GO" id="GO:0005886">
    <property type="term" value="C:plasma membrane"/>
    <property type="evidence" value="ECO:0007669"/>
    <property type="project" value="UniProtKB-SubCell"/>
</dbReference>
<dbReference type="GO" id="GO:0008381">
    <property type="term" value="F:mechanosensitive monoatomic ion channel activity"/>
    <property type="evidence" value="ECO:0007669"/>
    <property type="project" value="UniProtKB-UniRule"/>
</dbReference>
<dbReference type="FunFam" id="1.10.1200.120:FF:000001">
    <property type="entry name" value="Large-conductance mechanosensitive channel"/>
    <property type="match status" value="1"/>
</dbReference>
<dbReference type="Gene3D" id="1.10.1200.120">
    <property type="entry name" value="Large-conductance mechanosensitive channel, MscL, domain 1"/>
    <property type="match status" value="1"/>
</dbReference>
<dbReference type="HAMAP" id="MF_00115">
    <property type="entry name" value="MscL"/>
    <property type="match status" value="1"/>
</dbReference>
<dbReference type="InterPro" id="IPR019823">
    <property type="entry name" value="Mechanosensitive_channel_CS"/>
</dbReference>
<dbReference type="InterPro" id="IPR001185">
    <property type="entry name" value="MS_channel"/>
</dbReference>
<dbReference type="InterPro" id="IPR037673">
    <property type="entry name" value="MSC/AndL"/>
</dbReference>
<dbReference type="InterPro" id="IPR036019">
    <property type="entry name" value="MscL_channel"/>
</dbReference>
<dbReference type="NCBIfam" id="TIGR00220">
    <property type="entry name" value="mscL"/>
    <property type="match status" value="1"/>
</dbReference>
<dbReference type="NCBIfam" id="NF001843">
    <property type="entry name" value="PRK00567.1-4"/>
    <property type="match status" value="1"/>
</dbReference>
<dbReference type="NCBIfam" id="NF010557">
    <property type="entry name" value="PRK13952.1"/>
    <property type="match status" value="1"/>
</dbReference>
<dbReference type="PANTHER" id="PTHR30266:SF2">
    <property type="entry name" value="LARGE-CONDUCTANCE MECHANOSENSITIVE CHANNEL"/>
    <property type="match status" value="1"/>
</dbReference>
<dbReference type="PANTHER" id="PTHR30266">
    <property type="entry name" value="MECHANOSENSITIVE CHANNEL MSCL"/>
    <property type="match status" value="1"/>
</dbReference>
<dbReference type="Pfam" id="PF01741">
    <property type="entry name" value="MscL"/>
    <property type="match status" value="1"/>
</dbReference>
<dbReference type="PRINTS" id="PR01264">
    <property type="entry name" value="MECHCHANNEL"/>
</dbReference>
<dbReference type="SUPFAM" id="SSF81330">
    <property type="entry name" value="Gated mechanosensitive channel"/>
    <property type="match status" value="1"/>
</dbReference>
<dbReference type="PROSITE" id="PS01327">
    <property type="entry name" value="MSCL"/>
    <property type="match status" value="1"/>
</dbReference>
<feature type="chain" id="PRO_1000015418" description="Large-conductance mechanosensitive channel">
    <location>
        <begin position="1"/>
        <end position="143"/>
    </location>
</feature>
<feature type="transmembrane region" description="Helical" evidence="1">
    <location>
        <begin position="19"/>
        <end position="39"/>
    </location>
</feature>
<feature type="transmembrane region" description="Helical" evidence="1">
    <location>
        <begin position="81"/>
        <end position="101"/>
    </location>
</feature>
<sequence length="143" mass="15248">MLKEFREFAMKGNVVDLAVGVIIGAAFGAIVTSMVGDLIMPVIGAVTGGLDFSNYFTPLSKAVTANSLAEAKKQGAVLAWGSFLTITLNFLIVAGVLFGVIRAMNRLKRNDEAVAASPPKPTREQELLTEIRDILKSGIRPQV</sequence>
<proteinExistence type="inferred from homology"/>
<evidence type="ECO:0000255" key="1">
    <source>
        <dbReference type="HAMAP-Rule" id="MF_00115"/>
    </source>
</evidence>
<comment type="function">
    <text evidence="1">Channel that opens in response to stretch forces in the membrane lipid bilayer. May participate in the regulation of osmotic pressure changes within the cell.</text>
</comment>
<comment type="subunit">
    <text evidence="1">Homopentamer.</text>
</comment>
<comment type="subcellular location">
    <subcellularLocation>
        <location evidence="1">Cell inner membrane</location>
        <topology evidence="1">Multi-pass membrane protein</topology>
    </subcellularLocation>
</comment>
<comment type="similarity">
    <text evidence="1">Belongs to the MscL family.</text>
</comment>